<protein>
    <recommendedName>
        <fullName>Septin-interacting protein 1</fullName>
    </recommendedName>
    <alternativeName>
        <fullName>Septin and tuftelin-interacting protein 1</fullName>
        <shortName>STIP-1</shortName>
    </alternativeName>
</protein>
<reference key="1">
    <citation type="journal article" date="2002" name="J. Cell Sci.">
        <title>Identification of septin-interacting proteins and characterization of the Smt3/SUMO-conjugation system in Drosophila.</title>
        <authorList>
            <person name="Shih H.-P."/>
            <person name="Hales K.G."/>
            <person name="Pringle J.R."/>
            <person name="Peifer M."/>
        </authorList>
    </citation>
    <scope>NUCLEOTIDE SEQUENCE [MRNA]</scope>
    <scope>INTERACTION WITH PNUT</scope>
</reference>
<reference key="2">
    <citation type="journal article" date="2000" name="Science">
        <title>The genome sequence of Drosophila melanogaster.</title>
        <authorList>
            <person name="Adams M.D."/>
            <person name="Celniker S.E."/>
            <person name="Holt R.A."/>
            <person name="Evans C.A."/>
            <person name="Gocayne J.D."/>
            <person name="Amanatides P.G."/>
            <person name="Scherer S.E."/>
            <person name="Li P.W."/>
            <person name="Hoskins R.A."/>
            <person name="Galle R.F."/>
            <person name="George R.A."/>
            <person name="Lewis S.E."/>
            <person name="Richards S."/>
            <person name="Ashburner M."/>
            <person name="Henderson S.N."/>
            <person name="Sutton G.G."/>
            <person name="Wortman J.R."/>
            <person name="Yandell M.D."/>
            <person name="Zhang Q."/>
            <person name="Chen L.X."/>
            <person name="Brandon R.C."/>
            <person name="Rogers Y.-H.C."/>
            <person name="Blazej R.G."/>
            <person name="Champe M."/>
            <person name="Pfeiffer B.D."/>
            <person name="Wan K.H."/>
            <person name="Doyle C."/>
            <person name="Baxter E.G."/>
            <person name="Helt G."/>
            <person name="Nelson C.R."/>
            <person name="Miklos G.L.G."/>
            <person name="Abril J.F."/>
            <person name="Agbayani A."/>
            <person name="An H.-J."/>
            <person name="Andrews-Pfannkoch C."/>
            <person name="Baldwin D."/>
            <person name="Ballew R.M."/>
            <person name="Basu A."/>
            <person name="Baxendale J."/>
            <person name="Bayraktaroglu L."/>
            <person name="Beasley E.M."/>
            <person name="Beeson K.Y."/>
            <person name="Benos P.V."/>
            <person name="Berman B.P."/>
            <person name="Bhandari D."/>
            <person name="Bolshakov S."/>
            <person name="Borkova D."/>
            <person name="Botchan M.R."/>
            <person name="Bouck J."/>
            <person name="Brokstein P."/>
            <person name="Brottier P."/>
            <person name="Burtis K.C."/>
            <person name="Busam D.A."/>
            <person name="Butler H."/>
            <person name="Cadieu E."/>
            <person name="Center A."/>
            <person name="Chandra I."/>
            <person name="Cherry J.M."/>
            <person name="Cawley S."/>
            <person name="Dahlke C."/>
            <person name="Davenport L.B."/>
            <person name="Davies P."/>
            <person name="de Pablos B."/>
            <person name="Delcher A."/>
            <person name="Deng Z."/>
            <person name="Mays A.D."/>
            <person name="Dew I."/>
            <person name="Dietz S.M."/>
            <person name="Dodson K."/>
            <person name="Doup L.E."/>
            <person name="Downes M."/>
            <person name="Dugan-Rocha S."/>
            <person name="Dunkov B.C."/>
            <person name="Dunn P."/>
            <person name="Durbin K.J."/>
            <person name="Evangelista C.C."/>
            <person name="Ferraz C."/>
            <person name="Ferriera S."/>
            <person name="Fleischmann W."/>
            <person name="Fosler C."/>
            <person name="Gabrielian A.E."/>
            <person name="Garg N.S."/>
            <person name="Gelbart W.M."/>
            <person name="Glasser K."/>
            <person name="Glodek A."/>
            <person name="Gong F."/>
            <person name="Gorrell J.H."/>
            <person name="Gu Z."/>
            <person name="Guan P."/>
            <person name="Harris M."/>
            <person name="Harris N.L."/>
            <person name="Harvey D.A."/>
            <person name="Heiman T.J."/>
            <person name="Hernandez J.R."/>
            <person name="Houck J."/>
            <person name="Hostin D."/>
            <person name="Houston K.A."/>
            <person name="Howland T.J."/>
            <person name="Wei M.-H."/>
            <person name="Ibegwam C."/>
            <person name="Jalali M."/>
            <person name="Kalush F."/>
            <person name="Karpen G.H."/>
            <person name="Ke Z."/>
            <person name="Kennison J.A."/>
            <person name="Ketchum K.A."/>
            <person name="Kimmel B.E."/>
            <person name="Kodira C.D."/>
            <person name="Kraft C.L."/>
            <person name="Kravitz S."/>
            <person name="Kulp D."/>
            <person name="Lai Z."/>
            <person name="Lasko P."/>
            <person name="Lei Y."/>
            <person name="Levitsky A.A."/>
            <person name="Li J.H."/>
            <person name="Li Z."/>
            <person name="Liang Y."/>
            <person name="Lin X."/>
            <person name="Liu X."/>
            <person name="Mattei B."/>
            <person name="McIntosh T.C."/>
            <person name="McLeod M.P."/>
            <person name="McPherson D."/>
            <person name="Merkulov G."/>
            <person name="Milshina N.V."/>
            <person name="Mobarry C."/>
            <person name="Morris J."/>
            <person name="Moshrefi A."/>
            <person name="Mount S.M."/>
            <person name="Moy M."/>
            <person name="Murphy B."/>
            <person name="Murphy L."/>
            <person name="Muzny D.M."/>
            <person name="Nelson D.L."/>
            <person name="Nelson D.R."/>
            <person name="Nelson K.A."/>
            <person name="Nixon K."/>
            <person name="Nusskern D.R."/>
            <person name="Pacleb J.M."/>
            <person name="Palazzolo M."/>
            <person name="Pittman G.S."/>
            <person name="Pan S."/>
            <person name="Pollard J."/>
            <person name="Puri V."/>
            <person name="Reese M.G."/>
            <person name="Reinert K."/>
            <person name="Remington K."/>
            <person name="Saunders R.D.C."/>
            <person name="Scheeler F."/>
            <person name="Shen H."/>
            <person name="Shue B.C."/>
            <person name="Siden-Kiamos I."/>
            <person name="Simpson M."/>
            <person name="Skupski M.P."/>
            <person name="Smith T.J."/>
            <person name="Spier E."/>
            <person name="Spradling A.C."/>
            <person name="Stapleton M."/>
            <person name="Strong R."/>
            <person name="Sun E."/>
            <person name="Svirskas R."/>
            <person name="Tector C."/>
            <person name="Turner R."/>
            <person name="Venter E."/>
            <person name="Wang A.H."/>
            <person name="Wang X."/>
            <person name="Wang Z.-Y."/>
            <person name="Wassarman D.A."/>
            <person name="Weinstock G.M."/>
            <person name="Weissenbach J."/>
            <person name="Williams S.M."/>
            <person name="Woodage T."/>
            <person name="Worley K.C."/>
            <person name="Wu D."/>
            <person name="Yang S."/>
            <person name="Yao Q.A."/>
            <person name="Ye J."/>
            <person name="Yeh R.-F."/>
            <person name="Zaveri J.S."/>
            <person name="Zhan M."/>
            <person name="Zhang G."/>
            <person name="Zhao Q."/>
            <person name="Zheng L."/>
            <person name="Zheng X.H."/>
            <person name="Zhong F.N."/>
            <person name="Zhong W."/>
            <person name="Zhou X."/>
            <person name="Zhu S.C."/>
            <person name="Zhu X."/>
            <person name="Smith H.O."/>
            <person name="Gibbs R.A."/>
            <person name="Myers E.W."/>
            <person name="Rubin G.M."/>
            <person name="Venter J.C."/>
        </authorList>
    </citation>
    <scope>NUCLEOTIDE SEQUENCE [LARGE SCALE GENOMIC DNA]</scope>
    <source>
        <strain>Berkeley</strain>
    </source>
</reference>
<reference key="3">
    <citation type="journal article" date="2002" name="Genome Biol.">
        <title>Annotation of the Drosophila melanogaster euchromatic genome: a systematic review.</title>
        <authorList>
            <person name="Misra S."/>
            <person name="Crosby M.A."/>
            <person name="Mungall C.J."/>
            <person name="Matthews B.B."/>
            <person name="Campbell K.S."/>
            <person name="Hradecky P."/>
            <person name="Huang Y."/>
            <person name="Kaminker J.S."/>
            <person name="Millburn G.H."/>
            <person name="Prochnik S.E."/>
            <person name="Smith C.D."/>
            <person name="Tupy J.L."/>
            <person name="Whitfield E.J."/>
            <person name="Bayraktaroglu L."/>
            <person name="Berman B.P."/>
            <person name="Bettencourt B.R."/>
            <person name="Celniker S.E."/>
            <person name="de Grey A.D.N.J."/>
            <person name="Drysdale R.A."/>
            <person name="Harris N.L."/>
            <person name="Richter J."/>
            <person name="Russo S."/>
            <person name="Schroeder A.J."/>
            <person name="Shu S.Q."/>
            <person name="Stapleton M."/>
            <person name="Yamada C."/>
            <person name="Ashburner M."/>
            <person name="Gelbart W.M."/>
            <person name="Rubin G.M."/>
            <person name="Lewis S.E."/>
        </authorList>
    </citation>
    <scope>GENOME REANNOTATION</scope>
    <source>
        <strain>Berkeley</strain>
    </source>
</reference>
<reference key="4">
    <citation type="journal article" date="2002" name="Genome Biol.">
        <title>A Drosophila full-length cDNA resource.</title>
        <authorList>
            <person name="Stapleton M."/>
            <person name="Carlson J.W."/>
            <person name="Brokstein P."/>
            <person name="Yu C."/>
            <person name="Champe M."/>
            <person name="George R.A."/>
            <person name="Guarin H."/>
            <person name="Kronmiller B."/>
            <person name="Pacleb J.M."/>
            <person name="Park S."/>
            <person name="Wan K.H."/>
            <person name="Rubin G.M."/>
            <person name="Celniker S.E."/>
        </authorList>
    </citation>
    <scope>NUCLEOTIDE SEQUENCE [LARGE SCALE MRNA]</scope>
    <source>
        <strain>Berkeley</strain>
        <tissue>Head</tissue>
    </source>
</reference>
<reference key="5">
    <citation type="journal article" date="2008" name="J. Proteome Res.">
        <title>Phosphoproteome analysis of Drosophila melanogaster embryos.</title>
        <authorList>
            <person name="Zhai B."/>
            <person name="Villen J."/>
            <person name="Beausoleil S.A."/>
            <person name="Mintseris J."/>
            <person name="Gygi S.P."/>
        </authorList>
    </citation>
    <scope>PHOSPHORYLATION [LARGE SCALE ANALYSIS] AT SER-43; SER-47 AND THR-53</scope>
    <scope>IDENTIFICATION BY MASS SPECTROMETRY</scope>
    <source>
        <tissue>Embryo</tissue>
    </source>
</reference>
<evidence type="ECO:0000250" key="1"/>
<evidence type="ECO:0000255" key="2"/>
<evidence type="ECO:0000255" key="3">
    <source>
        <dbReference type="PROSITE-ProRule" id="PRU00092"/>
    </source>
</evidence>
<evidence type="ECO:0000256" key="4">
    <source>
        <dbReference type="SAM" id="MobiDB-lite"/>
    </source>
</evidence>
<evidence type="ECO:0000269" key="5">
    <source>
    </source>
</evidence>
<evidence type="ECO:0000269" key="6">
    <source>
    </source>
</evidence>
<evidence type="ECO:0000305" key="7"/>
<keyword id="KW-0175">Coiled coil</keyword>
<keyword id="KW-0507">mRNA processing</keyword>
<keyword id="KW-0508">mRNA splicing</keyword>
<keyword id="KW-0539">Nucleus</keyword>
<keyword id="KW-0597">Phosphoprotein</keyword>
<keyword id="KW-1185">Reference proteome</keyword>
<keyword id="KW-0747">Spliceosome</keyword>
<accession>Q9Y103</accession>
<accession>Q9NHN7</accession>
<sequence length="839" mass="94828">MSDNDYERFEITDYDLDNEFNINRPRGRQSRHQQIYGIWADDSEEESGGEGGTKRRGRAARKPKDYTMPVNFVAGGIQQAGKKKKKALQADDEKGSQKEGAEADQGEESDDSAASGRPAFGQNDPGSSNSSSEEERPTLSRKQPSTTFQHRSHIASERNVGAWEQHTRGIGAKLLLQMGYEPGKGLGKDLQGISHPVQAHVRKGRGAIGAYGPETAASIGGKTNKSIKVDEDVREAKEFKDQLNKWRKGSAGGAEPMERQGKRYYYKSVEEVIAKGHTSGHLLSEKLSKKLGNVRVIDMTGPEKRVLSGYHALGQAKITPEETLYDTEATEKGSAPACVFAMPELTHNLQLLVSQCEQQIIAIDNQERECSSQQAALESEHRKLEEIVQLERNHIRTLEESLERVERLIDNPDLSLPQAERLFRELLVDYAAEFHEFGLADLAAGVIAPLLKRELVQWQPLENPTEPLPLIKKWRGMLQQGDAAEQQPRNVFDPYSSLIWAGVMPSFRSSAAAWQPKEHPPMASLLDAWAPLLPSWVLDSVLEQLVLPRLVAGVQEWDPLTDTVPIDSWVLPWHAILGSKLEEAVYPQIRSKLGIALRAWSPHDRSARAMLTPWQKAFPEEEMQEFLQRYIVPKLQATLGELIINPMHQDLELWQQVWEWHELIDPMYMAQLLDRHFFPRWMQVLVVWLNQSPDYAEISRWYTGWKSMLSEPLLREPSVKEHLRRALEIMHRASDTLLQPTVTPTPPPPVPPAPVIMMDLIHPPAQLEFKELVSQQCADLGIIFAPLPGRREMGKQIYRVGKLFCYIDRHVCMVSDGSFSNWKPVSLNHLLERSQTGIL</sequence>
<gene>
    <name type="primary">sip1</name>
    <name type="synonym">stip-1</name>
    <name type="ORF">CG7238</name>
</gene>
<proteinExistence type="evidence at protein level"/>
<organism>
    <name type="scientific">Drosophila melanogaster</name>
    <name type="common">Fruit fly</name>
    <dbReference type="NCBI Taxonomy" id="7227"/>
    <lineage>
        <taxon>Eukaryota</taxon>
        <taxon>Metazoa</taxon>
        <taxon>Ecdysozoa</taxon>
        <taxon>Arthropoda</taxon>
        <taxon>Hexapoda</taxon>
        <taxon>Insecta</taxon>
        <taxon>Pterygota</taxon>
        <taxon>Neoptera</taxon>
        <taxon>Endopterygota</taxon>
        <taxon>Diptera</taxon>
        <taxon>Brachycera</taxon>
        <taxon>Muscomorpha</taxon>
        <taxon>Ephydroidea</taxon>
        <taxon>Drosophilidae</taxon>
        <taxon>Drosophila</taxon>
        <taxon>Sophophora</taxon>
    </lineage>
</organism>
<dbReference type="EMBL" id="AF221101">
    <property type="protein sequence ID" value="AAF26743.1"/>
    <property type="molecule type" value="mRNA"/>
</dbReference>
<dbReference type="EMBL" id="AE014134">
    <property type="protein sequence ID" value="AAF52282.1"/>
    <property type="molecule type" value="Genomic_DNA"/>
</dbReference>
<dbReference type="EMBL" id="AF145670">
    <property type="protein sequence ID" value="AAD38645.1"/>
    <property type="molecule type" value="mRNA"/>
</dbReference>
<dbReference type="RefSeq" id="NP_001285636.1">
    <property type="nucleotide sequence ID" value="NM_001298707.1"/>
</dbReference>
<dbReference type="RefSeq" id="NP_524725.2">
    <property type="nucleotide sequence ID" value="NM_079986.4"/>
</dbReference>
<dbReference type="SMR" id="Q9Y103"/>
<dbReference type="BioGRID" id="68911">
    <property type="interactions" value="47"/>
</dbReference>
<dbReference type="FunCoup" id="Q9Y103">
    <property type="interactions" value="1895"/>
</dbReference>
<dbReference type="IntAct" id="Q9Y103">
    <property type="interactions" value="6"/>
</dbReference>
<dbReference type="STRING" id="7227.FBpp0311644"/>
<dbReference type="GlyGen" id="Q9Y103">
    <property type="glycosylation" value="1 site"/>
</dbReference>
<dbReference type="iPTMnet" id="Q9Y103"/>
<dbReference type="PaxDb" id="7227-FBpp0078765"/>
<dbReference type="EnsemblMetazoa" id="FBtr0079134">
    <property type="protein sequence ID" value="FBpp0078765"/>
    <property type="gene ID" value="FBgn0024191"/>
</dbReference>
<dbReference type="EnsemblMetazoa" id="FBtr0345545">
    <property type="protein sequence ID" value="FBpp0311644"/>
    <property type="gene ID" value="FBgn0024191"/>
</dbReference>
<dbReference type="GeneID" id="44238"/>
<dbReference type="KEGG" id="dme:Dmel_CG7238"/>
<dbReference type="AGR" id="FB:FBgn0024191"/>
<dbReference type="CTD" id="44238"/>
<dbReference type="FlyBase" id="FBgn0024191">
    <property type="gene designation" value="sip1"/>
</dbReference>
<dbReference type="VEuPathDB" id="VectorBase:FBgn0024191"/>
<dbReference type="eggNOG" id="KOG2184">
    <property type="taxonomic scope" value="Eukaryota"/>
</dbReference>
<dbReference type="HOGENOM" id="CLU_007977_1_1_1"/>
<dbReference type="InParanoid" id="Q9Y103"/>
<dbReference type="OMA" id="CEQDIIQ"/>
<dbReference type="OrthoDB" id="4822at2759"/>
<dbReference type="PhylomeDB" id="Q9Y103"/>
<dbReference type="SignaLink" id="Q9Y103"/>
<dbReference type="BioGRID-ORCS" id="44238">
    <property type="hits" value="0 hits in 1 CRISPR screen"/>
</dbReference>
<dbReference type="GenomeRNAi" id="44238"/>
<dbReference type="PRO" id="PR:Q9Y103"/>
<dbReference type="Proteomes" id="UP000000803">
    <property type="component" value="Chromosome 2L"/>
</dbReference>
<dbReference type="Bgee" id="FBgn0024191">
    <property type="expression patterns" value="Expressed in mid-late elongation-stage spermatid (Drosophila) in testis and 27 other cell types or tissues"/>
</dbReference>
<dbReference type="ExpressionAtlas" id="Q9Y103">
    <property type="expression patterns" value="baseline and differential"/>
</dbReference>
<dbReference type="GO" id="GO:0071013">
    <property type="term" value="C:catalytic step 2 spliceosome"/>
    <property type="evidence" value="ECO:0007005"/>
    <property type="project" value="FlyBase"/>
</dbReference>
<dbReference type="GO" id="GO:0005737">
    <property type="term" value="C:cytoplasm"/>
    <property type="evidence" value="ECO:0007005"/>
    <property type="project" value="FlyBase"/>
</dbReference>
<dbReference type="GO" id="GO:0071011">
    <property type="term" value="C:precatalytic spliceosome"/>
    <property type="evidence" value="ECO:0007005"/>
    <property type="project" value="FlyBase"/>
</dbReference>
<dbReference type="GO" id="GO:0005681">
    <property type="term" value="C:spliceosomal complex"/>
    <property type="evidence" value="ECO:0000250"/>
    <property type="project" value="UniProtKB"/>
</dbReference>
<dbReference type="GO" id="GO:0071008">
    <property type="term" value="C:U2-type post-mRNA release spliceosomal complex"/>
    <property type="evidence" value="ECO:0000318"/>
    <property type="project" value="GO_Central"/>
</dbReference>
<dbReference type="GO" id="GO:0003676">
    <property type="term" value="F:nucleic acid binding"/>
    <property type="evidence" value="ECO:0007669"/>
    <property type="project" value="InterPro"/>
</dbReference>
<dbReference type="GO" id="GO:0000398">
    <property type="term" value="P:mRNA splicing, via spliceosome"/>
    <property type="evidence" value="ECO:0000305"/>
    <property type="project" value="FlyBase"/>
</dbReference>
<dbReference type="GO" id="GO:0000390">
    <property type="term" value="P:spliceosomal complex disassembly"/>
    <property type="evidence" value="ECO:0000318"/>
    <property type="project" value="GO_Central"/>
</dbReference>
<dbReference type="InterPro" id="IPR000467">
    <property type="entry name" value="G_patch_dom"/>
</dbReference>
<dbReference type="InterPro" id="IPR022783">
    <property type="entry name" value="GCFC_dom"/>
</dbReference>
<dbReference type="InterPro" id="IPR022159">
    <property type="entry name" value="STIP/TFIP11_N"/>
</dbReference>
<dbReference type="InterPro" id="IPR024933">
    <property type="entry name" value="TFP11"/>
</dbReference>
<dbReference type="InterPro" id="IPR045211">
    <property type="entry name" value="TFP11/STIP/Ntr1"/>
</dbReference>
<dbReference type="PANTHER" id="PTHR23329:SF1">
    <property type="entry name" value="TUFTELIN-INTERACTING PROTEIN 11"/>
    <property type="match status" value="1"/>
</dbReference>
<dbReference type="PANTHER" id="PTHR23329">
    <property type="entry name" value="TUFTELIN-INTERACTING PROTEIN 11-RELATED"/>
    <property type="match status" value="1"/>
</dbReference>
<dbReference type="Pfam" id="PF01585">
    <property type="entry name" value="G-patch"/>
    <property type="match status" value="1"/>
</dbReference>
<dbReference type="Pfam" id="PF07842">
    <property type="entry name" value="GCFC"/>
    <property type="match status" value="1"/>
</dbReference>
<dbReference type="Pfam" id="PF12457">
    <property type="entry name" value="TIP_N"/>
    <property type="match status" value="1"/>
</dbReference>
<dbReference type="PIRSF" id="PIRSF017706">
    <property type="entry name" value="TFIP11"/>
    <property type="match status" value="1"/>
</dbReference>
<dbReference type="SMART" id="SM00443">
    <property type="entry name" value="G_patch"/>
    <property type="match status" value="1"/>
</dbReference>
<dbReference type="PROSITE" id="PS50174">
    <property type="entry name" value="G_PATCH"/>
    <property type="match status" value="1"/>
</dbReference>
<feature type="chain" id="PRO_0000342284" description="Septin-interacting protein 1">
    <location>
        <begin position="1"/>
        <end position="839"/>
    </location>
</feature>
<feature type="domain" description="G-patch" evidence="3">
    <location>
        <begin position="167"/>
        <end position="213"/>
    </location>
</feature>
<feature type="region of interest" description="Disordered" evidence="4">
    <location>
        <begin position="22"/>
        <end position="164"/>
    </location>
</feature>
<feature type="coiled-coil region" evidence="2">
    <location>
        <begin position="363"/>
        <end position="411"/>
    </location>
</feature>
<feature type="compositionally biased region" description="Basic and acidic residues" evidence="4">
    <location>
        <begin position="88"/>
        <end position="101"/>
    </location>
</feature>
<feature type="compositionally biased region" description="Acidic residues" evidence="4">
    <location>
        <begin position="102"/>
        <end position="111"/>
    </location>
</feature>
<feature type="compositionally biased region" description="Polar residues" evidence="4">
    <location>
        <begin position="140"/>
        <end position="149"/>
    </location>
</feature>
<feature type="modified residue" description="Phosphoserine" evidence="6">
    <location>
        <position position="43"/>
    </location>
</feature>
<feature type="modified residue" description="Phosphoserine" evidence="6">
    <location>
        <position position="47"/>
    </location>
</feature>
<feature type="modified residue" description="Phosphothreonine" evidence="6">
    <location>
        <position position="53"/>
    </location>
</feature>
<feature type="sequence conflict" description="In Ref. 1; AAF26743." evidence="7" ref="1">
    <original>N</original>
    <variation>I</variation>
    <location>
        <position position="645"/>
    </location>
</feature>
<comment type="function">
    <text evidence="1">May be involved in pre-mRNA splicing.</text>
</comment>
<comment type="subunit">
    <text evidence="1 5">Identified in the spliceosome C complex (By similarity). Interacts with pnut.</text>
</comment>
<comment type="subcellular location">
    <subcellularLocation>
        <location evidence="1">Nucleus</location>
    </subcellularLocation>
</comment>
<comment type="similarity">
    <text evidence="7">Belongs to the TFP11/STIP family.</text>
</comment>
<name>TFP11_DROME</name>